<evidence type="ECO:0000255" key="1">
    <source>
        <dbReference type="HAMAP-Rule" id="MF_00735"/>
    </source>
</evidence>
<keyword id="KW-0963">Cytoplasm</keyword>
<keyword id="KW-0489">Methyltransferase</keyword>
<keyword id="KW-0949">S-adenosyl-L-methionine</keyword>
<keyword id="KW-0808">Transferase</keyword>
<organism>
    <name type="scientific">Prochlorococcus marinus (strain AS9601)</name>
    <dbReference type="NCBI Taxonomy" id="146891"/>
    <lineage>
        <taxon>Bacteria</taxon>
        <taxon>Bacillati</taxon>
        <taxon>Cyanobacteriota</taxon>
        <taxon>Cyanophyceae</taxon>
        <taxon>Synechococcales</taxon>
        <taxon>Prochlorococcaceae</taxon>
        <taxon>Prochlorococcus</taxon>
    </lineage>
</organism>
<reference key="1">
    <citation type="journal article" date="2007" name="PLoS Genet.">
        <title>Patterns and implications of gene gain and loss in the evolution of Prochlorococcus.</title>
        <authorList>
            <person name="Kettler G.C."/>
            <person name="Martiny A.C."/>
            <person name="Huang K."/>
            <person name="Zucker J."/>
            <person name="Coleman M.L."/>
            <person name="Rodrigue S."/>
            <person name="Chen F."/>
            <person name="Lapidus A."/>
            <person name="Ferriera S."/>
            <person name="Johnson J."/>
            <person name="Steglich C."/>
            <person name="Church G.M."/>
            <person name="Richardson P."/>
            <person name="Chisholm S.W."/>
        </authorList>
    </citation>
    <scope>NUCLEOTIDE SEQUENCE [LARGE SCALE GENOMIC DNA]</scope>
    <source>
        <strain>AS9601</strain>
    </source>
</reference>
<name>PRMA_PROMS</name>
<sequence length="303" mass="34692">MTIKDWYKLTFLIESDSEEIIIWKLNELGIFSFSFEYLIKNKNKKEVNIWLPVADWSESSRFGVEKIITKLLNINAPTNQFFDWSIIKEEDWLTSWKKYWAPELVGNHFLILPCWINLNEKFKDKKIIKIDPGAAFGTGSHPSTYLCLEKMDNILFSDKKILDIGSGSGILSVAARLLGAKEVCAVDNDYLAINATKSNFQLNFGNLNNLNTYLGSFNEVILKNQLKQFDFVLCNILAEVIKEMIPNIYKCLRNNGEVIFSGILNSQKDEIIKILIQNDLKLLDVSTRKDWACISAQKASDPT</sequence>
<comment type="function">
    <text evidence="1">Methylates ribosomal protein L11.</text>
</comment>
<comment type="catalytic activity">
    <reaction evidence="1">
        <text>L-lysyl-[protein] + 3 S-adenosyl-L-methionine = N(6),N(6),N(6)-trimethyl-L-lysyl-[protein] + 3 S-adenosyl-L-homocysteine + 3 H(+)</text>
        <dbReference type="Rhea" id="RHEA:54192"/>
        <dbReference type="Rhea" id="RHEA-COMP:9752"/>
        <dbReference type="Rhea" id="RHEA-COMP:13826"/>
        <dbReference type="ChEBI" id="CHEBI:15378"/>
        <dbReference type="ChEBI" id="CHEBI:29969"/>
        <dbReference type="ChEBI" id="CHEBI:57856"/>
        <dbReference type="ChEBI" id="CHEBI:59789"/>
        <dbReference type="ChEBI" id="CHEBI:61961"/>
    </reaction>
</comment>
<comment type="subcellular location">
    <subcellularLocation>
        <location evidence="1">Cytoplasm</location>
    </subcellularLocation>
</comment>
<comment type="similarity">
    <text evidence="1">Belongs to the methyltransferase superfamily. PrmA family.</text>
</comment>
<proteinExistence type="inferred from homology"/>
<feature type="chain" id="PRO_1000046061" description="Ribosomal protein L11 methyltransferase">
    <location>
        <begin position="1"/>
        <end position="303"/>
    </location>
</feature>
<feature type="binding site" evidence="1">
    <location>
        <position position="144"/>
    </location>
    <ligand>
        <name>S-adenosyl-L-methionine</name>
        <dbReference type="ChEBI" id="CHEBI:59789"/>
    </ligand>
</feature>
<feature type="binding site" evidence="1">
    <location>
        <position position="165"/>
    </location>
    <ligand>
        <name>S-adenosyl-L-methionine</name>
        <dbReference type="ChEBI" id="CHEBI:59789"/>
    </ligand>
</feature>
<feature type="binding site" evidence="1">
    <location>
        <position position="187"/>
    </location>
    <ligand>
        <name>S-adenosyl-L-methionine</name>
        <dbReference type="ChEBI" id="CHEBI:59789"/>
    </ligand>
</feature>
<feature type="binding site" evidence="1">
    <location>
        <position position="235"/>
    </location>
    <ligand>
        <name>S-adenosyl-L-methionine</name>
        <dbReference type="ChEBI" id="CHEBI:59789"/>
    </ligand>
</feature>
<gene>
    <name evidence="1" type="primary">prmA</name>
    <name type="ordered locus">A9601_15541</name>
</gene>
<accession>A2BSS6</accession>
<protein>
    <recommendedName>
        <fullName evidence="1">Ribosomal protein L11 methyltransferase</fullName>
        <shortName evidence="1">L11 Mtase</shortName>
        <ecNumber evidence="1">2.1.1.-</ecNumber>
    </recommendedName>
</protein>
<dbReference type="EC" id="2.1.1.-" evidence="1"/>
<dbReference type="EMBL" id="CP000551">
    <property type="protein sequence ID" value="ABM70837.1"/>
    <property type="molecule type" value="Genomic_DNA"/>
</dbReference>
<dbReference type="RefSeq" id="WP_011818968.1">
    <property type="nucleotide sequence ID" value="NC_008816.1"/>
</dbReference>
<dbReference type="SMR" id="A2BSS6"/>
<dbReference type="STRING" id="146891.A9601_15541"/>
<dbReference type="KEGG" id="pmb:A9601_15541"/>
<dbReference type="eggNOG" id="COG2264">
    <property type="taxonomic scope" value="Bacteria"/>
</dbReference>
<dbReference type="HOGENOM" id="CLU_049382_0_1_3"/>
<dbReference type="OrthoDB" id="9785995at2"/>
<dbReference type="Proteomes" id="UP000002590">
    <property type="component" value="Chromosome"/>
</dbReference>
<dbReference type="GO" id="GO:0005737">
    <property type="term" value="C:cytoplasm"/>
    <property type="evidence" value="ECO:0007669"/>
    <property type="project" value="UniProtKB-SubCell"/>
</dbReference>
<dbReference type="GO" id="GO:0016279">
    <property type="term" value="F:protein-lysine N-methyltransferase activity"/>
    <property type="evidence" value="ECO:0007669"/>
    <property type="project" value="RHEA"/>
</dbReference>
<dbReference type="GO" id="GO:0032259">
    <property type="term" value="P:methylation"/>
    <property type="evidence" value="ECO:0007669"/>
    <property type="project" value="UniProtKB-KW"/>
</dbReference>
<dbReference type="CDD" id="cd02440">
    <property type="entry name" value="AdoMet_MTases"/>
    <property type="match status" value="1"/>
</dbReference>
<dbReference type="Gene3D" id="3.40.50.150">
    <property type="entry name" value="Vaccinia Virus protein VP39"/>
    <property type="match status" value="1"/>
</dbReference>
<dbReference type="HAMAP" id="MF_00735">
    <property type="entry name" value="Methyltr_PrmA"/>
    <property type="match status" value="1"/>
</dbReference>
<dbReference type="InterPro" id="IPR050078">
    <property type="entry name" value="Ribosomal_L11_MeTrfase_PrmA"/>
</dbReference>
<dbReference type="InterPro" id="IPR004498">
    <property type="entry name" value="Ribosomal_PrmA_MeTrfase"/>
</dbReference>
<dbReference type="InterPro" id="IPR029063">
    <property type="entry name" value="SAM-dependent_MTases_sf"/>
</dbReference>
<dbReference type="NCBIfam" id="TIGR00406">
    <property type="entry name" value="prmA"/>
    <property type="match status" value="1"/>
</dbReference>
<dbReference type="PANTHER" id="PTHR43648">
    <property type="entry name" value="ELECTRON TRANSFER FLAVOPROTEIN BETA SUBUNIT LYSINE METHYLTRANSFERASE"/>
    <property type="match status" value="1"/>
</dbReference>
<dbReference type="PANTHER" id="PTHR43648:SF1">
    <property type="entry name" value="ELECTRON TRANSFER FLAVOPROTEIN BETA SUBUNIT LYSINE METHYLTRANSFERASE"/>
    <property type="match status" value="1"/>
</dbReference>
<dbReference type="Pfam" id="PF06325">
    <property type="entry name" value="PrmA"/>
    <property type="match status" value="1"/>
</dbReference>
<dbReference type="PIRSF" id="PIRSF000401">
    <property type="entry name" value="RPL11_MTase"/>
    <property type="match status" value="1"/>
</dbReference>
<dbReference type="SUPFAM" id="SSF53335">
    <property type="entry name" value="S-adenosyl-L-methionine-dependent methyltransferases"/>
    <property type="match status" value="1"/>
</dbReference>